<evidence type="ECO:0000255" key="1">
    <source>
        <dbReference type="HAMAP-Rule" id="MF_00406"/>
    </source>
</evidence>
<gene>
    <name evidence="1" type="primary">fabZ</name>
    <name type="ordered locus">CLH_1087</name>
</gene>
<name>FABZ_CLOBA</name>
<organism>
    <name type="scientific">Clostridium botulinum (strain Alaska E43 / Type E3)</name>
    <dbReference type="NCBI Taxonomy" id="508767"/>
    <lineage>
        <taxon>Bacteria</taxon>
        <taxon>Bacillati</taxon>
        <taxon>Bacillota</taxon>
        <taxon>Clostridia</taxon>
        <taxon>Eubacteriales</taxon>
        <taxon>Clostridiaceae</taxon>
        <taxon>Clostridium</taxon>
    </lineage>
</organism>
<comment type="function">
    <text evidence="1">Involved in unsaturated fatty acids biosynthesis. Catalyzes the dehydration of short chain beta-hydroxyacyl-ACPs and long chain saturated and unsaturated beta-hydroxyacyl-ACPs.</text>
</comment>
<comment type="catalytic activity">
    <reaction evidence="1">
        <text>a (3R)-hydroxyacyl-[ACP] = a (2E)-enoyl-[ACP] + H2O</text>
        <dbReference type="Rhea" id="RHEA:13097"/>
        <dbReference type="Rhea" id="RHEA-COMP:9925"/>
        <dbReference type="Rhea" id="RHEA-COMP:9945"/>
        <dbReference type="ChEBI" id="CHEBI:15377"/>
        <dbReference type="ChEBI" id="CHEBI:78784"/>
        <dbReference type="ChEBI" id="CHEBI:78827"/>
        <dbReference type="EC" id="4.2.1.59"/>
    </reaction>
</comment>
<comment type="subcellular location">
    <subcellularLocation>
        <location evidence="1">Cytoplasm</location>
    </subcellularLocation>
</comment>
<comment type="similarity">
    <text evidence="1">Belongs to the thioester dehydratase family. FabZ subfamily.</text>
</comment>
<reference key="1">
    <citation type="submission" date="2008-05" db="EMBL/GenBank/DDBJ databases">
        <title>Complete genome sequence of Clostridium botulinum E3 str. Alaska E43.</title>
        <authorList>
            <person name="Brinkac L.M."/>
            <person name="Brown J.L."/>
            <person name="Bruce D."/>
            <person name="Detter C."/>
            <person name="Munk C."/>
            <person name="Smith L.A."/>
            <person name="Smith T.J."/>
            <person name="Sutton G."/>
            <person name="Brettin T.S."/>
        </authorList>
    </citation>
    <scope>NUCLEOTIDE SEQUENCE [LARGE SCALE GENOMIC DNA]</scope>
    <source>
        <strain>Alaska E43 / Type E3</strain>
    </source>
</reference>
<keyword id="KW-0963">Cytoplasm</keyword>
<keyword id="KW-0441">Lipid A biosynthesis</keyword>
<keyword id="KW-0444">Lipid biosynthesis</keyword>
<keyword id="KW-0443">Lipid metabolism</keyword>
<keyword id="KW-0456">Lyase</keyword>
<accession>B2V3S4</accession>
<protein>
    <recommendedName>
        <fullName evidence="1">3-hydroxyacyl-[acyl-carrier-protein] dehydratase FabZ</fullName>
        <ecNumber evidence="1">4.2.1.59</ecNumber>
    </recommendedName>
    <alternativeName>
        <fullName evidence="1">(3R)-hydroxymyristoyl-[acyl-carrier-protein] dehydratase</fullName>
        <shortName evidence="1">(3R)-hydroxymyristoyl-ACP dehydrase</shortName>
    </alternativeName>
    <alternativeName>
        <fullName evidence="1">Beta-hydroxyacyl-ACP dehydratase</fullName>
    </alternativeName>
</protein>
<dbReference type="EC" id="4.2.1.59" evidence="1"/>
<dbReference type="EMBL" id="CP001078">
    <property type="protein sequence ID" value="ACD50996.1"/>
    <property type="molecule type" value="Genomic_DNA"/>
</dbReference>
<dbReference type="RefSeq" id="WP_003370298.1">
    <property type="nucleotide sequence ID" value="NC_010723.1"/>
</dbReference>
<dbReference type="SMR" id="B2V3S4"/>
<dbReference type="KEGG" id="cbt:CLH_1087"/>
<dbReference type="HOGENOM" id="CLU_078912_3_0_9"/>
<dbReference type="GO" id="GO:0005737">
    <property type="term" value="C:cytoplasm"/>
    <property type="evidence" value="ECO:0007669"/>
    <property type="project" value="UniProtKB-SubCell"/>
</dbReference>
<dbReference type="GO" id="GO:0016020">
    <property type="term" value="C:membrane"/>
    <property type="evidence" value="ECO:0007669"/>
    <property type="project" value="GOC"/>
</dbReference>
<dbReference type="GO" id="GO:0019171">
    <property type="term" value="F:(3R)-hydroxyacyl-[acyl-carrier-protein] dehydratase activity"/>
    <property type="evidence" value="ECO:0007669"/>
    <property type="project" value="UniProtKB-EC"/>
</dbReference>
<dbReference type="GO" id="GO:0006633">
    <property type="term" value="P:fatty acid biosynthetic process"/>
    <property type="evidence" value="ECO:0007669"/>
    <property type="project" value="UniProtKB-UniRule"/>
</dbReference>
<dbReference type="GO" id="GO:0009245">
    <property type="term" value="P:lipid A biosynthetic process"/>
    <property type="evidence" value="ECO:0007669"/>
    <property type="project" value="UniProtKB-UniRule"/>
</dbReference>
<dbReference type="CDD" id="cd01288">
    <property type="entry name" value="FabZ"/>
    <property type="match status" value="1"/>
</dbReference>
<dbReference type="FunFam" id="3.10.129.10:FF:000001">
    <property type="entry name" value="3-hydroxyacyl-[acyl-carrier-protein] dehydratase FabZ"/>
    <property type="match status" value="1"/>
</dbReference>
<dbReference type="Gene3D" id="3.10.129.10">
    <property type="entry name" value="Hotdog Thioesterase"/>
    <property type="match status" value="1"/>
</dbReference>
<dbReference type="HAMAP" id="MF_00406">
    <property type="entry name" value="FabZ"/>
    <property type="match status" value="1"/>
</dbReference>
<dbReference type="InterPro" id="IPR013114">
    <property type="entry name" value="FabA_FabZ"/>
</dbReference>
<dbReference type="InterPro" id="IPR010084">
    <property type="entry name" value="FabZ"/>
</dbReference>
<dbReference type="InterPro" id="IPR029069">
    <property type="entry name" value="HotDog_dom_sf"/>
</dbReference>
<dbReference type="NCBIfam" id="TIGR01750">
    <property type="entry name" value="fabZ"/>
    <property type="match status" value="1"/>
</dbReference>
<dbReference type="NCBIfam" id="NF000582">
    <property type="entry name" value="PRK00006.1"/>
    <property type="match status" value="1"/>
</dbReference>
<dbReference type="PANTHER" id="PTHR30272">
    <property type="entry name" value="3-HYDROXYACYL-[ACYL-CARRIER-PROTEIN] DEHYDRATASE"/>
    <property type="match status" value="1"/>
</dbReference>
<dbReference type="PANTHER" id="PTHR30272:SF1">
    <property type="entry name" value="3-HYDROXYACYL-[ACYL-CARRIER-PROTEIN] DEHYDRATASE"/>
    <property type="match status" value="1"/>
</dbReference>
<dbReference type="Pfam" id="PF07977">
    <property type="entry name" value="FabA"/>
    <property type="match status" value="1"/>
</dbReference>
<dbReference type="SUPFAM" id="SSF54637">
    <property type="entry name" value="Thioesterase/thiol ester dehydrase-isomerase"/>
    <property type="match status" value="1"/>
</dbReference>
<proteinExistence type="inferred from homology"/>
<feature type="chain" id="PRO_1000197288" description="3-hydroxyacyl-[acyl-carrier-protein] dehydratase FabZ">
    <location>
        <begin position="1"/>
        <end position="142"/>
    </location>
</feature>
<feature type="active site" evidence="1">
    <location>
        <position position="50"/>
    </location>
</feature>
<sequence>MLKIEEIKEILPHRYPFLLIDRVTEMDIEEKLFVKGYKNVSANEQFFQGHYPQEPIMPGVLQIEALAQAGAVAILSMEKFKGKTPLFAGTNKVRFKAKVVPGDRLDLYCEIVKLKGPIGIGKGIASVDGKTVCEAEILFAIG</sequence>